<protein>
    <recommendedName>
        <fullName evidence="1">Chaperonin GroEL</fullName>
        <ecNumber evidence="1">5.6.1.7</ecNumber>
    </recommendedName>
    <alternativeName>
        <fullName evidence="1">60 kDa chaperonin</fullName>
    </alternativeName>
    <alternativeName>
        <fullName evidence="1">Chaperonin-60</fullName>
        <shortName evidence="1">Cpn60</shortName>
    </alternativeName>
</protein>
<sequence length="547" mass="57422">MTAKDVKFGNDARVKMLAGVNVLADAVKVTLGPKGRNVILDKAFGAPTITKDGVSVAREIELEDKFENMGAQMVKEVASKANDAAGDGTTTATVLAQAIVSEGLKAVAAGMNPMDLKRGIDKAVNAVVEELKILSKPCETSKEIEQVGTISANADETVGKLIAQAMEKVGKEGVITVEDGSGLSDELDVVEGMQFDRGYLSPYFINKPEAATVELDNPFILLVDKKISNIRELLPVLEGVAKAGKPLLIIAEDVEGEALATLVVNTMRGIVKVAAVKAPGFGDRRKAMLQDIAILTAGTVISEEIGMELEKATLEDLGQAKRVVINKDNTTIIDGIGDEAQIKGRVAQIRQQIEEATSDYDKEKLQERVAKLAGGVAVIKVGAATEVEMKEKKDRVDDALHATRAAVEEGIVAGGGVALIRAATKVATTLKGDNEDQDVGIKLALRAMEAPLRQIVTNAGEEASVVASAVKNGEGNFGYNAGTEQYGDMIAMGILDPTKVTRSALQFAASIAGLMVTTECMVADLPKEEKADLTGGMGGMGGMGGMM</sequence>
<keyword id="KW-0067">ATP-binding</keyword>
<keyword id="KW-0143">Chaperone</keyword>
<keyword id="KW-0963">Cytoplasm</keyword>
<keyword id="KW-0413">Isomerase</keyword>
<keyword id="KW-0547">Nucleotide-binding</keyword>
<name>CH60_HISS1</name>
<gene>
    <name evidence="1" type="primary">groEL</name>
    <name evidence="1" type="synonym">groL</name>
    <name type="ordered locus">HS_0468</name>
</gene>
<organism>
    <name type="scientific">Histophilus somni (strain 129Pt)</name>
    <name type="common">Haemophilus somnus</name>
    <dbReference type="NCBI Taxonomy" id="205914"/>
    <lineage>
        <taxon>Bacteria</taxon>
        <taxon>Pseudomonadati</taxon>
        <taxon>Pseudomonadota</taxon>
        <taxon>Gammaproteobacteria</taxon>
        <taxon>Pasteurellales</taxon>
        <taxon>Pasteurellaceae</taxon>
        <taxon>Histophilus</taxon>
    </lineage>
</organism>
<reference key="1">
    <citation type="journal article" date="2007" name="J. Bacteriol.">
        <title>Complete genome sequence of Haemophilus somnus (Histophilus somni) strain 129Pt and comparison to Haemophilus ducreyi 35000HP and Haemophilus influenzae Rd.</title>
        <authorList>
            <person name="Challacombe J.F."/>
            <person name="Duncan A.J."/>
            <person name="Brettin T.S."/>
            <person name="Bruce D."/>
            <person name="Chertkov O."/>
            <person name="Detter J.C."/>
            <person name="Han C.S."/>
            <person name="Misra M."/>
            <person name="Richardson P."/>
            <person name="Tapia R."/>
            <person name="Thayer N."/>
            <person name="Xie G."/>
            <person name="Inzana T.J."/>
        </authorList>
    </citation>
    <scope>NUCLEOTIDE SEQUENCE [LARGE SCALE GENOMIC DNA]</scope>
    <source>
        <strain>129Pt</strain>
    </source>
</reference>
<comment type="function">
    <text evidence="1">Together with its co-chaperonin GroES, plays an essential role in assisting protein folding. The GroEL-GroES system forms a nano-cage that allows encapsulation of the non-native substrate proteins and provides a physical environment optimized to promote and accelerate protein folding.</text>
</comment>
<comment type="catalytic activity">
    <reaction evidence="1">
        <text>ATP + H2O + a folded polypeptide = ADP + phosphate + an unfolded polypeptide.</text>
        <dbReference type="EC" id="5.6.1.7"/>
    </reaction>
</comment>
<comment type="subunit">
    <text evidence="1">Forms a cylinder of 14 subunits composed of two heptameric rings stacked back-to-back. Interacts with the co-chaperonin GroES.</text>
</comment>
<comment type="subcellular location">
    <subcellularLocation>
        <location evidence="1">Cytoplasm</location>
    </subcellularLocation>
</comment>
<comment type="similarity">
    <text evidence="1">Belongs to the chaperonin (HSP60) family.</text>
</comment>
<proteinExistence type="inferred from homology"/>
<dbReference type="EC" id="5.6.1.7" evidence="1"/>
<dbReference type="EMBL" id="CP000436">
    <property type="protein sequence ID" value="ABI24745.1"/>
    <property type="molecule type" value="Genomic_DNA"/>
</dbReference>
<dbReference type="SMR" id="Q0I284"/>
<dbReference type="KEGG" id="hso:HS_0468"/>
<dbReference type="eggNOG" id="COG0459">
    <property type="taxonomic scope" value="Bacteria"/>
</dbReference>
<dbReference type="HOGENOM" id="CLU_016503_3_0_6"/>
<dbReference type="GO" id="GO:0005737">
    <property type="term" value="C:cytoplasm"/>
    <property type="evidence" value="ECO:0007669"/>
    <property type="project" value="UniProtKB-SubCell"/>
</dbReference>
<dbReference type="GO" id="GO:0005524">
    <property type="term" value="F:ATP binding"/>
    <property type="evidence" value="ECO:0007669"/>
    <property type="project" value="UniProtKB-UniRule"/>
</dbReference>
<dbReference type="GO" id="GO:0140662">
    <property type="term" value="F:ATP-dependent protein folding chaperone"/>
    <property type="evidence" value="ECO:0007669"/>
    <property type="project" value="InterPro"/>
</dbReference>
<dbReference type="GO" id="GO:0016853">
    <property type="term" value="F:isomerase activity"/>
    <property type="evidence" value="ECO:0007669"/>
    <property type="project" value="UniProtKB-KW"/>
</dbReference>
<dbReference type="GO" id="GO:0051082">
    <property type="term" value="F:unfolded protein binding"/>
    <property type="evidence" value="ECO:0007669"/>
    <property type="project" value="UniProtKB-UniRule"/>
</dbReference>
<dbReference type="GO" id="GO:0042026">
    <property type="term" value="P:protein refolding"/>
    <property type="evidence" value="ECO:0007669"/>
    <property type="project" value="UniProtKB-UniRule"/>
</dbReference>
<dbReference type="CDD" id="cd03344">
    <property type="entry name" value="GroEL"/>
    <property type="match status" value="1"/>
</dbReference>
<dbReference type="FunFam" id="1.10.560.10:FF:000001">
    <property type="entry name" value="60 kDa chaperonin"/>
    <property type="match status" value="1"/>
</dbReference>
<dbReference type="FunFam" id="3.50.7.10:FF:000001">
    <property type="entry name" value="60 kDa chaperonin"/>
    <property type="match status" value="1"/>
</dbReference>
<dbReference type="Gene3D" id="3.50.7.10">
    <property type="entry name" value="GroEL"/>
    <property type="match status" value="1"/>
</dbReference>
<dbReference type="Gene3D" id="1.10.560.10">
    <property type="entry name" value="GroEL-like equatorial domain"/>
    <property type="match status" value="1"/>
</dbReference>
<dbReference type="Gene3D" id="3.30.260.10">
    <property type="entry name" value="TCP-1-like chaperonin intermediate domain"/>
    <property type="match status" value="1"/>
</dbReference>
<dbReference type="HAMAP" id="MF_00600">
    <property type="entry name" value="CH60"/>
    <property type="match status" value="1"/>
</dbReference>
<dbReference type="InterPro" id="IPR018370">
    <property type="entry name" value="Chaperonin_Cpn60_CS"/>
</dbReference>
<dbReference type="InterPro" id="IPR001844">
    <property type="entry name" value="Cpn60/GroEL"/>
</dbReference>
<dbReference type="InterPro" id="IPR002423">
    <property type="entry name" value="Cpn60/GroEL/TCP-1"/>
</dbReference>
<dbReference type="InterPro" id="IPR027409">
    <property type="entry name" value="GroEL-like_apical_dom_sf"/>
</dbReference>
<dbReference type="InterPro" id="IPR027413">
    <property type="entry name" value="GROEL-like_equatorial_sf"/>
</dbReference>
<dbReference type="InterPro" id="IPR027410">
    <property type="entry name" value="TCP-1-like_intermed_sf"/>
</dbReference>
<dbReference type="NCBIfam" id="TIGR02348">
    <property type="entry name" value="GroEL"/>
    <property type="match status" value="1"/>
</dbReference>
<dbReference type="NCBIfam" id="NF000592">
    <property type="entry name" value="PRK00013.1"/>
    <property type="match status" value="1"/>
</dbReference>
<dbReference type="NCBIfam" id="NF009487">
    <property type="entry name" value="PRK12849.1"/>
    <property type="match status" value="1"/>
</dbReference>
<dbReference type="NCBIfam" id="NF009488">
    <property type="entry name" value="PRK12850.1"/>
    <property type="match status" value="1"/>
</dbReference>
<dbReference type="NCBIfam" id="NF009489">
    <property type="entry name" value="PRK12851.1"/>
    <property type="match status" value="1"/>
</dbReference>
<dbReference type="PANTHER" id="PTHR45633">
    <property type="entry name" value="60 KDA HEAT SHOCK PROTEIN, MITOCHONDRIAL"/>
    <property type="match status" value="1"/>
</dbReference>
<dbReference type="Pfam" id="PF00118">
    <property type="entry name" value="Cpn60_TCP1"/>
    <property type="match status" value="1"/>
</dbReference>
<dbReference type="PRINTS" id="PR00298">
    <property type="entry name" value="CHAPERONIN60"/>
</dbReference>
<dbReference type="SUPFAM" id="SSF52029">
    <property type="entry name" value="GroEL apical domain-like"/>
    <property type="match status" value="1"/>
</dbReference>
<dbReference type="SUPFAM" id="SSF48592">
    <property type="entry name" value="GroEL equatorial domain-like"/>
    <property type="match status" value="1"/>
</dbReference>
<dbReference type="SUPFAM" id="SSF54849">
    <property type="entry name" value="GroEL-intermediate domain like"/>
    <property type="match status" value="1"/>
</dbReference>
<dbReference type="PROSITE" id="PS00296">
    <property type="entry name" value="CHAPERONINS_CPN60"/>
    <property type="match status" value="1"/>
</dbReference>
<accession>Q0I284</accession>
<evidence type="ECO:0000255" key="1">
    <source>
        <dbReference type="HAMAP-Rule" id="MF_00600"/>
    </source>
</evidence>
<feature type="chain" id="PRO_1000025790" description="Chaperonin GroEL">
    <location>
        <begin position="1"/>
        <end position="547"/>
    </location>
</feature>
<feature type="binding site" evidence="1">
    <location>
        <begin position="30"/>
        <end position="33"/>
    </location>
    <ligand>
        <name>ATP</name>
        <dbReference type="ChEBI" id="CHEBI:30616"/>
    </ligand>
</feature>
<feature type="binding site" evidence="1">
    <location>
        <position position="51"/>
    </location>
    <ligand>
        <name>ATP</name>
        <dbReference type="ChEBI" id="CHEBI:30616"/>
    </ligand>
</feature>
<feature type="binding site" evidence="1">
    <location>
        <begin position="87"/>
        <end position="91"/>
    </location>
    <ligand>
        <name>ATP</name>
        <dbReference type="ChEBI" id="CHEBI:30616"/>
    </ligand>
</feature>
<feature type="binding site" evidence="1">
    <location>
        <position position="415"/>
    </location>
    <ligand>
        <name>ATP</name>
        <dbReference type="ChEBI" id="CHEBI:30616"/>
    </ligand>
</feature>
<feature type="binding site" evidence="1">
    <location>
        <position position="496"/>
    </location>
    <ligand>
        <name>ATP</name>
        <dbReference type="ChEBI" id="CHEBI:30616"/>
    </ligand>
</feature>